<gene>
    <name type="primary">CNGC19</name>
    <name type="synonym">CNBT2</name>
    <name type="ordered locus">At3g17690</name>
    <name type="ORF">MKP6.27</name>
</gene>
<protein>
    <recommendedName>
        <fullName>Putative cyclic nucleotide-gated ion channel 19</fullName>
    </recommendedName>
    <alternativeName>
        <fullName>Cyclic nucleotide-binding transporter 2</fullName>
    </alternativeName>
</protein>
<reference key="1">
    <citation type="submission" date="1999-05" db="EMBL/GenBank/DDBJ databases">
        <title>Two genes encoding putative cyclic nucleotide-binding ion transporters from Arabidopsis thaliana.</title>
        <authorList>
            <person name="Wolff P."/>
            <person name="Palme K."/>
        </authorList>
    </citation>
    <scope>NUCLEOTIDE SEQUENCE [GENOMIC DNA]</scope>
    <source>
        <strain>cv. Columbia</strain>
    </source>
</reference>
<reference key="2">
    <citation type="journal article" date="2000" name="DNA Res.">
        <title>Structural analysis of Arabidopsis thaliana chromosome 3. I. Sequence features of the regions of 4,504,864 bp covered by sixty P1 and TAC clones.</title>
        <authorList>
            <person name="Sato S."/>
            <person name="Nakamura Y."/>
            <person name="Kaneko T."/>
            <person name="Katoh T."/>
            <person name="Asamizu E."/>
            <person name="Tabata S."/>
        </authorList>
    </citation>
    <scope>NUCLEOTIDE SEQUENCE [LARGE SCALE GENOMIC DNA]</scope>
    <source>
        <strain>cv. Columbia</strain>
    </source>
</reference>
<reference key="3">
    <citation type="journal article" date="2017" name="Plant J.">
        <title>Araport11: a complete reannotation of the Arabidopsis thaliana reference genome.</title>
        <authorList>
            <person name="Cheng C.Y."/>
            <person name="Krishnakumar V."/>
            <person name="Chan A.P."/>
            <person name="Thibaud-Nissen F."/>
            <person name="Schobel S."/>
            <person name="Town C.D."/>
        </authorList>
    </citation>
    <scope>GENOME REANNOTATION</scope>
    <source>
        <strain>cv. Columbia</strain>
    </source>
</reference>
<reference key="4">
    <citation type="journal article" date="2001" name="Plant Physiol.">
        <title>Phylogenetic relationships within cation transporter families of Arabidopsis.</title>
        <authorList>
            <person name="Maeser P."/>
            <person name="Thomine S."/>
            <person name="Schroeder J.I."/>
            <person name="Ward J.M."/>
            <person name="Hirschi K."/>
            <person name="Sze H."/>
            <person name="Talke I.N."/>
            <person name="Amtmann A."/>
            <person name="Maathuis F.J.M."/>
            <person name="Sanders D."/>
            <person name="Harper J.F."/>
            <person name="Tchieu J."/>
            <person name="Gribskov M."/>
            <person name="Persans M.W."/>
            <person name="Salt D.E."/>
            <person name="Kim S.A."/>
            <person name="Guerinot M.L."/>
        </authorList>
    </citation>
    <scope>GENE FAMILY</scope>
    <scope>NOMENCLATURE</scope>
</reference>
<name>CNG19_ARATH</name>
<sequence length="729" mass="84049">MAHTRTFTSRNRSVSLSNPSFSIDGFDNSTVTLGYTGPLRTQRIRPPLVQMSGPIHSTRRTEPLFSPSPQESPDSSSTVDVPPEDDFVFKNANLLRSGQLGMCNDPYCTTCPSYYNRQAAQLHTSRVSASRFRTVLYGDARGWAKRFASSVRRCLPGIMNPHSKFVQVWTRVLAFSSLVAIFIDPLFFFLLLIQQDNKCIAIDWRATKVLVSLRSITDLIFFINILLQFRLAYVAPESRIVGAGQLVDHPRKIARHYFRGKFLLDMFIVFPIPQIMILRIIPLHLGTRREESEKQILRATVLFQYIPKLYRLLPLLAGQTSTGFIFESAWANFVINLLTFMLAGHAVGSCWYLSALQRVKKCMLNAWNISADERRNLIDCARGSYASKSQRDLWRDNASVNACFQENGYTYGIYLKAVNLTNESSFFTRFSYSLYWGFQQISTLAGNLSPSYSVGEVFFTMGIIGLGLLLFARLIGNMHNFLQSLDRRRMEMMLRKRDVEQWMSHRRLPEDIRKRVREVERYTWAATRGVNEELLFENMPDDLQRDIRRHLFKFLKKVRIFSLMDESVLDSIRERLKQRTYIRSSTVLHHRGLVEKMVFIVRGEMESIGEDGSVLPLSEGDVCGEELLTWCLSSINPDGTRIKMPPKGLVSNRNVRCVTNVEAFSLSVADLEDVTSLFSRFLRSHRVQGAIRYESPYWRLRAAMQIQVAWRYRKRQLQRLNTAHSNSNR</sequence>
<dbReference type="EMBL" id="AF148542">
    <property type="protein sequence ID" value="AAF73129.1"/>
    <property type="molecule type" value="Genomic_DNA"/>
</dbReference>
<dbReference type="EMBL" id="AB022219">
    <property type="protein sequence ID" value="BAB02061.1"/>
    <property type="molecule type" value="Genomic_DNA"/>
</dbReference>
<dbReference type="EMBL" id="CP002686">
    <property type="protein sequence ID" value="AEE75993.1"/>
    <property type="molecule type" value="Genomic_DNA"/>
</dbReference>
<dbReference type="RefSeq" id="NP_188396.2">
    <property type="nucleotide sequence ID" value="NM_112650.4"/>
</dbReference>
<dbReference type="BioGRID" id="6369">
    <property type="interactions" value="10"/>
</dbReference>
<dbReference type="FunCoup" id="Q9LDR2">
    <property type="interactions" value="202"/>
</dbReference>
<dbReference type="IntAct" id="Q9LDR2">
    <property type="interactions" value="8"/>
</dbReference>
<dbReference type="STRING" id="3702.Q9LDR2"/>
<dbReference type="TCDB" id="1.A.1.5.23">
    <property type="family name" value="the voltage-gated ion channel (vic) superfamily"/>
</dbReference>
<dbReference type="PaxDb" id="3702-AT3G17690.1"/>
<dbReference type="EnsemblPlants" id="AT3G17690.1">
    <property type="protein sequence ID" value="AT3G17690.1"/>
    <property type="gene ID" value="AT3G17690"/>
</dbReference>
<dbReference type="GeneID" id="821036"/>
<dbReference type="Gramene" id="AT3G17690.1">
    <property type="protein sequence ID" value="AT3G17690.1"/>
    <property type="gene ID" value="AT3G17690"/>
</dbReference>
<dbReference type="KEGG" id="ath:AT3G17690"/>
<dbReference type="Araport" id="AT3G17690"/>
<dbReference type="TAIR" id="AT3G17690">
    <property type="gene designation" value="CNGC19"/>
</dbReference>
<dbReference type="eggNOG" id="KOG0498">
    <property type="taxonomic scope" value="Eukaryota"/>
</dbReference>
<dbReference type="HOGENOM" id="CLU_013069_2_0_1"/>
<dbReference type="InParanoid" id="Q9LDR2"/>
<dbReference type="OMA" id="CGRGINI"/>
<dbReference type="OrthoDB" id="421226at2759"/>
<dbReference type="PhylomeDB" id="Q9LDR2"/>
<dbReference type="PRO" id="PR:Q9LDR2"/>
<dbReference type="Proteomes" id="UP000006548">
    <property type="component" value="Chromosome 3"/>
</dbReference>
<dbReference type="ExpressionAtlas" id="Q9LDR2">
    <property type="expression patterns" value="baseline and differential"/>
</dbReference>
<dbReference type="GO" id="GO:0005886">
    <property type="term" value="C:plasma membrane"/>
    <property type="evidence" value="ECO:0000314"/>
    <property type="project" value="TAIR"/>
</dbReference>
<dbReference type="GO" id="GO:0005516">
    <property type="term" value="F:calmodulin binding"/>
    <property type="evidence" value="ECO:0007669"/>
    <property type="project" value="UniProtKB-KW"/>
</dbReference>
<dbReference type="GO" id="GO:0030552">
    <property type="term" value="F:cAMP binding"/>
    <property type="evidence" value="ECO:0007669"/>
    <property type="project" value="UniProtKB-KW"/>
</dbReference>
<dbReference type="GO" id="GO:0030553">
    <property type="term" value="F:cGMP binding"/>
    <property type="evidence" value="ECO:0007669"/>
    <property type="project" value="UniProtKB-KW"/>
</dbReference>
<dbReference type="GO" id="GO:0099604">
    <property type="term" value="F:ligand-gated calcium channel activity"/>
    <property type="evidence" value="ECO:0000314"/>
    <property type="project" value="TAIR"/>
</dbReference>
<dbReference type="GO" id="GO:0080027">
    <property type="term" value="P:response to herbivore"/>
    <property type="evidence" value="ECO:0000315"/>
    <property type="project" value="TAIR"/>
</dbReference>
<dbReference type="CDD" id="cd00038">
    <property type="entry name" value="CAP_ED"/>
    <property type="match status" value="1"/>
</dbReference>
<dbReference type="Gene3D" id="1.10.287.70">
    <property type="match status" value="1"/>
</dbReference>
<dbReference type="Gene3D" id="1.10.287.630">
    <property type="entry name" value="Helix hairpin bin"/>
    <property type="match status" value="1"/>
</dbReference>
<dbReference type="Gene3D" id="2.60.120.10">
    <property type="entry name" value="Jelly Rolls"/>
    <property type="match status" value="1"/>
</dbReference>
<dbReference type="InterPro" id="IPR000595">
    <property type="entry name" value="cNMP-bd_dom"/>
</dbReference>
<dbReference type="InterPro" id="IPR018490">
    <property type="entry name" value="cNMP-bd_dom_sf"/>
</dbReference>
<dbReference type="InterPro" id="IPR005821">
    <property type="entry name" value="Ion_trans_dom"/>
</dbReference>
<dbReference type="InterPro" id="IPR014710">
    <property type="entry name" value="RmlC-like_jellyroll"/>
</dbReference>
<dbReference type="PANTHER" id="PTHR45651">
    <property type="entry name" value="CYCLIC NUCLEOTIDE-GATED ION CHANNEL 15-RELATED-RELATED"/>
    <property type="match status" value="1"/>
</dbReference>
<dbReference type="PANTHER" id="PTHR45651:SF40">
    <property type="entry name" value="CYCLIC NUCLEOTIDE-GATED ION CHANNEL 19-RELATED"/>
    <property type="match status" value="1"/>
</dbReference>
<dbReference type="Pfam" id="PF00520">
    <property type="entry name" value="Ion_trans"/>
    <property type="match status" value="1"/>
</dbReference>
<dbReference type="SMART" id="SM00100">
    <property type="entry name" value="cNMP"/>
    <property type="match status" value="1"/>
</dbReference>
<dbReference type="SUPFAM" id="SSF51206">
    <property type="entry name" value="cAMP-binding domain-like"/>
    <property type="match status" value="1"/>
</dbReference>
<dbReference type="SUPFAM" id="SSF81324">
    <property type="entry name" value="Voltage-gated potassium channels"/>
    <property type="match status" value="1"/>
</dbReference>
<dbReference type="PROSITE" id="PS50042">
    <property type="entry name" value="CNMP_BINDING_3"/>
    <property type="match status" value="1"/>
</dbReference>
<feature type="chain" id="PRO_0000219347" description="Putative cyclic nucleotide-gated ion channel 19">
    <location>
        <begin position="1"/>
        <end position="729"/>
    </location>
</feature>
<feature type="topological domain" description="Cytoplasmic" evidence="2">
    <location>
        <begin position="1"/>
        <end position="172"/>
    </location>
</feature>
<feature type="transmembrane region" description="Helical; Name=H1" evidence="2">
    <location>
        <begin position="173"/>
        <end position="193"/>
    </location>
</feature>
<feature type="topological domain" description="Extracellular" evidence="2">
    <location>
        <begin position="194"/>
        <end position="208"/>
    </location>
</feature>
<feature type="transmembrane region" description="Helical; Name=H2" evidence="2">
    <location>
        <begin position="209"/>
        <end position="229"/>
    </location>
</feature>
<feature type="topological domain" description="Cytoplasmic" evidence="2">
    <location>
        <begin position="230"/>
        <end position="261"/>
    </location>
</feature>
<feature type="transmembrane region" description="Helical; Name=H3" evidence="2">
    <location>
        <begin position="262"/>
        <end position="282"/>
    </location>
</feature>
<feature type="topological domain" description="Extracellular" evidence="2">
    <location>
        <begin position="283"/>
        <end position="295"/>
    </location>
</feature>
<feature type="transmembrane region" description="Helical; Name=H4" evidence="2">
    <location>
        <begin position="296"/>
        <end position="316"/>
    </location>
</feature>
<feature type="topological domain" description="Cytoplasmic" evidence="2">
    <location>
        <begin position="317"/>
        <end position="332"/>
    </location>
</feature>
<feature type="transmembrane region" description="Helical; Name=H5" evidence="2">
    <location>
        <begin position="333"/>
        <end position="353"/>
    </location>
</feature>
<feature type="topological domain" description="Extracellular" evidence="2">
    <location>
        <begin position="354"/>
        <end position="451"/>
    </location>
</feature>
<feature type="transmembrane region" description="Helical; Name=H6" evidence="2">
    <location>
        <begin position="452"/>
        <end position="472"/>
    </location>
</feature>
<feature type="topological domain" description="Cytoplasmic" evidence="2">
    <location>
        <begin position="473"/>
        <end position="729"/>
    </location>
</feature>
<feature type="domain" description="IQ">
    <location>
        <begin position="699"/>
        <end position="728"/>
    </location>
</feature>
<feature type="region of interest" description="Disordered" evidence="3">
    <location>
        <begin position="52"/>
        <end position="82"/>
    </location>
</feature>
<feature type="region of interest" description="Calmodulin-binding" evidence="1">
    <location>
        <begin position="678"/>
        <end position="694"/>
    </location>
</feature>
<feature type="compositionally biased region" description="Low complexity" evidence="3">
    <location>
        <begin position="67"/>
        <end position="81"/>
    </location>
</feature>
<feature type="binding site">
    <location>
        <begin position="560"/>
        <end position="677"/>
    </location>
    <ligand>
        <name>a nucleoside 3',5'-cyclic phosphate</name>
        <dbReference type="ChEBI" id="CHEBI:58464"/>
    </ligand>
</feature>
<feature type="binding site" evidence="1">
    <location>
        <position position="625"/>
    </location>
    <ligand>
        <name>a nucleoside 3',5'-cyclic phosphate</name>
        <dbReference type="ChEBI" id="CHEBI:58464"/>
    </ligand>
</feature>
<keyword id="KW-0112">Calmodulin-binding</keyword>
<keyword id="KW-0114">cAMP</keyword>
<keyword id="KW-0116">cAMP-binding</keyword>
<keyword id="KW-1003">Cell membrane</keyword>
<keyword id="KW-0140">cGMP</keyword>
<keyword id="KW-0142">cGMP-binding</keyword>
<keyword id="KW-0407">Ion channel</keyword>
<keyword id="KW-0406">Ion transport</keyword>
<keyword id="KW-1071">Ligand-gated ion channel</keyword>
<keyword id="KW-0472">Membrane</keyword>
<keyword id="KW-0547">Nucleotide-binding</keyword>
<keyword id="KW-1185">Reference proteome</keyword>
<keyword id="KW-0812">Transmembrane</keyword>
<keyword id="KW-1133">Transmembrane helix</keyword>
<keyword id="KW-0813">Transport</keyword>
<proteinExistence type="inferred from homology"/>
<evidence type="ECO:0000250" key="1"/>
<evidence type="ECO:0000255" key="2"/>
<evidence type="ECO:0000256" key="3">
    <source>
        <dbReference type="SAM" id="MobiDB-lite"/>
    </source>
</evidence>
<evidence type="ECO:0000305" key="4"/>
<accession>Q9LDR2</accession>
<organism>
    <name type="scientific">Arabidopsis thaliana</name>
    <name type="common">Mouse-ear cress</name>
    <dbReference type="NCBI Taxonomy" id="3702"/>
    <lineage>
        <taxon>Eukaryota</taxon>
        <taxon>Viridiplantae</taxon>
        <taxon>Streptophyta</taxon>
        <taxon>Embryophyta</taxon>
        <taxon>Tracheophyta</taxon>
        <taxon>Spermatophyta</taxon>
        <taxon>Magnoliopsida</taxon>
        <taxon>eudicotyledons</taxon>
        <taxon>Gunneridae</taxon>
        <taxon>Pentapetalae</taxon>
        <taxon>rosids</taxon>
        <taxon>malvids</taxon>
        <taxon>Brassicales</taxon>
        <taxon>Brassicaceae</taxon>
        <taxon>Camelineae</taxon>
        <taxon>Arabidopsis</taxon>
    </lineage>
</organism>
<comment type="function">
    <text>Putative cyclic nucleotide-gated ion channel.</text>
</comment>
<comment type="subunit">
    <text evidence="4">Homotetramer or heterotetramer.</text>
</comment>
<comment type="subcellular location">
    <subcellularLocation>
        <location evidence="4">Cell membrane</location>
        <topology evidence="4">Multi-pass membrane protein</topology>
    </subcellularLocation>
</comment>
<comment type="similarity">
    <text evidence="4">Belongs to the cyclic nucleotide-gated cation channel (TC 1.A.1.5) family.</text>
</comment>